<protein>
    <recommendedName>
        <fullName evidence="1">ATP phosphoribosyltransferase regulatory subunit</fullName>
    </recommendedName>
</protein>
<feature type="chain" id="PRO_1000016258" description="ATP phosphoribosyltransferase regulatory subunit">
    <location>
        <begin position="1"/>
        <end position="422"/>
    </location>
</feature>
<proteinExistence type="inferred from homology"/>
<dbReference type="EMBL" id="CP000728">
    <property type="protein sequence ID" value="ABS41273.1"/>
    <property type="molecule type" value="Genomic_DNA"/>
</dbReference>
<dbReference type="RefSeq" id="WP_012099669.1">
    <property type="nucleotide sequence ID" value="NC_009699.1"/>
</dbReference>
<dbReference type="SMR" id="A7GDQ0"/>
<dbReference type="KEGG" id="cbf:CLI_1647"/>
<dbReference type="HOGENOM" id="CLU_025113_0_0_9"/>
<dbReference type="UniPathway" id="UPA00031">
    <property type="reaction ID" value="UER00006"/>
</dbReference>
<dbReference type="Proteomes" id="UP000002410">
    <property type="component" value="Chromosome"/>
</dbReference>
<dbReference type="GO" id="GO:0005737">
    <property type="term" value="C:cytoplasm"/>
    <property type="evidence" value="ECO:0007669"/>
    <property type="project" value="UniProtKB-SubCell"/>
</dbReference>
<dbReference type="GO" id="GO:0140096">
    <property type="term" value="F:catalytic activity, acting on a protein"/>
    <property type="evidence" value="ECO:0007669"/>
    <property type="project" value="UniProtKB-ARBA"/>
</dbReference>
<dbReference type="GO" id="GO:0004821">
    <property type="term" value="F:histidine-tRNA ligase activity"/>
    <property type="evidence" value="ECO:0007669"/>
    <property type="project" value="TreeGrafter"/>
</dbReference>
<dbReference type="GO" id="GO:0016740">
    <property type="term" value="F:transferase activity"/>
    <property type="evidence" value="ECO:0007669"/>
    <property type="project" value="UniProtKB-ARBA"/>
</dbReference>
<dbReference type="GO" id="GO:0006427">
    <property type="term" value="P:histidyl-tRNA aminoacylation"/>
    <property type="evidence" value="ECO:0007669"/>
    <property type="project" value="TreeGrafter"/>
</dbReference>
<dbReference type="GO" id="GO:0000105">
    <property type="term" value="P:L-histidine biosynthetic process"/>
    <property type="evidence" value="ECO:0007669"/>
    <property type="project" value="UniProtKB-UniRule"/>
</dbReference>
<dbReference type="CDD" id="cd00773">
    <property type="entry name" value="HisRS-like_core"/>
    <property type="match status" value="1"/>
</dbReference>
<dbReference type="FunFam" id="3.30.930.10:FF:000175">
    <property type="entry name" value="ATP phosphoribosyltransferase regulatory subunit"/>
    <property type="match status" value="1"/>
</dbReference>
<dbReference type="Gene3D" id="3.30.930.10">
    <property type="entry name" value="Bira Bifunctional Protein, Domain 2"/>
    <property type="match status" value="1"/>
</dbReference>
<dbReference type="HAMAP" id="MF_00125">
    <property type="entry name" value="HisZ"/>
    <property type="match status" value="1"/>
</dbReference>
<dbReference type="InterPro" id="IPR006195">
    <property type="entry name" value="aa-tRNA-synth_II"/>
</dbReference>
<dbReference type="InterPro" id="IPR045864">
    <property type="entry name" value="aa-tRNA-synth_II/BPL/LPL"/>
</dbReference>
<dbReference type="InterPro" id="IPR041715">
    <property type="entry name" value="HisRS-like_core"/>
</dbReference>
<dbReference type="InterPro" id="IPR004516">
    <property type="entry name" value="HisRS/HisZ"/>
</dbReference>
<dbReference type="InterPro" id="IPR004517">
    <property type="entry name" value="HisZ"/>
</dbReference>
<dbReference type="NCBIfam" id="TIGR00443">
    <property type="entry name" value="hisZ_biosyn_reg"/>
    <property type="match status" value="1"/>
</dbReference>
<dbReference type="NCBIfam" id="NF008936">
    <property type="entry name" value="PRK12292.1-3"/>
    <property type="match status" value="1"/>
</dbReference>
<dbReference type="PANTHER" id="PTHR43707:SF6">
    <property type="entry name" value="ATP PHOSPHORIBOSYLTRANSFERASE REGULATORY SUBUNIT"/>
    <property type="match status" value="1"/>
</dbReference>
<dbReference type="PANTHER" id="PTHR43707">
    <property type="entry name" value="HISTIDYL-TRNA SYNTHETASE"/>
    <property type="match status" value="1"/>
</dbReference>
<dbReference type="Pfam" id="PF13393">
    <property type="entry name" value="tRNA-synt_His"/>
    <property type="match status" value="1"/>
</dbReference>
<dbReference type="PIRSF" id="PIRSF001549">
    <property type="entry name" value="His-tRNA_synth"/>
    <property type="match status" value="1"/>
</dbReference>
<dbReference type="SUPFAM" id="SSF55681">
    <property type="entry name" value="Class II aaRS and biotin synthetases"/>
    <property type="match status" value="1"/>
</dbReference>
<dbReference type="PROSITE" id="PS50862">
    <property type="entry name" value="AA_TRNA_LIGASE_II"/>
    <property type="match status" value="1"/>
</dbReference>
<accession>A7GDQ0</accession>
<comment type="function">
    <text evidence="1">Required for the first step of histidine biosynthesis. May allow the feedback regulation of ATP phosphoribosyltransferase activity by histidine.</text>
</comment>
<comment type="pathway">
    <text evidence="1">Amino-acid biosynthesis; L-histidine biosynthesis; L-histidine from 5-phospho-alpha-D-ribose 1-diphosphate: step 1/9.</text>
</comment>
<comment type="subunit">
    <text evidence="1">Heteromultimer composed of HisG and HisZ subunits.</text>
</comment>
<comment type="subcellular location">
    <subcellularLocation>
        <location evidence="1">Cytoplasm</location>
    </subcellularLocation>
</comment>
<comment type="miscellaneous">
    <text>This function is generally fulfilled by the C-terminal part of HisG, which is missing in some bacteria such as this one.</text>
</comment>
<comment type="similarity">
    <text evidence="1">Belongs to the class-II aminoacyl-tRNA synthetase family. HisZ subfamily.</text>
</comment>
<reference key="1">
    <citation type="submission" date="2007-06" db="EMBL/GenBank/DDBJ databases">
        <authorList>
            <person name="Brinkac L.M."/>
            <person name="Daugherty S."/>
            <person name="Dodson R.J."/>
            <person name="Madupu R."/>
            <person name="Brown J.L."/>
            <person name="Bruce D."/>
            <person name="Detter C."/>
            <person name="Munk C."/>
            <person name="Smith L.A."/>
            <person name="Smith T.J."/>
            <person name="White O."/>
            <person name="Brettin T.S."/>
        </authorList>
    </citation>
    <scope>NUCLEOTIDE SEQUENCE [LARGE SCALE GENOMIC DNA]</scope>
    <source>
        <strain>Langeland / NCTC 10281 / Type F</strain>
    </source>
</reference>
<name>HISZ_CLOBL</name>
<keyword id="KW-0028">Amino-acid biosynthesis</keyword>
<keyword id="KW-0963">Cytoplasm</keyword>
<keyword id="KW-0368">Histidine biosynthesis</keyword>
<organism>
    <name type="scientific">Clostridium botulinum (strain Langeland / NCTC 10281 / Type F)</name>
    <dbReference type="NCBI Taxonomy" id="441772"/>
    <lineage>
        <taxon>Bacteria</taxon>
        <taxon>Bacillati</taxon>
        <taxon>Bacillota</taxon>
        <taxon>Clostridia</taxon>
        <taxon>Eubacteriales</taxon>
        <taxon>Clostridiaceae</taxon>
        <taxon>Clostridium</taxon>
    </lineage>
</organism>
<gene>
    <name evidence="1" type="primary">hisZ</name>
    <name type="ordered locus">CLI_1647</name>
</gene>
<sequence length="422" mass="48651">MENWNKYIPEGMKDILFEESNIKLNIEDQLRKIYKYSGFSEIISPTIEFYDVFNSNIQAIPQEKMYKLFDNLGRILVLRPDMTTPIGRITGTKMKDCTYPLKLCYTANIFRVNEKLNGKRGEITQSGIEIIGTNGIKSDVDSIVTAINTLLSLGLKNFKIELGEAGFFQALTENMEIKEENLKKLKEIIRNKNYVALKKFLDEISSKYSKEDFELIKNLPKLFGDIKIIEKAKALTKNKKALKSLDDIYNIYKSIENIGLEAYISIDLGMVQNIDYYTGVIFKGYVEEVGDSILSGGRYDNLIQHFGIELPATGFAINVDDIMIALKKQNTMSMDKDKKVLIFYKEEFLRKAYDFMQELKMKKIICELSLLDDDKEILLYSKKKGIDFIIGFMGEEKLFVKDLKSDKIAFLKKDEIENLLML</sequence>
<evidence type="ECO:0000255" key="1">
    <source>
        <dbReference type="HAMAP-Rule" id="MF_00125"/>
    </source>
</evidence>